<sequence length="294" mass="34277">MLVLHNSQKLQILYKSLEKSIPESIKVYGAIFNIKDKNPFNMEVLVDAWPDYQIVITRPQKQEMKDDQDHYTNTYHIFTKAPDKLEEVLSYSNVISWEQTLQIQGCQEGLDEAIRKVATSKSVQVDYMKTILFIPELPKKHKTSSNDKMELFEVDDDNKEGNFSNMFLDASHAGLVNEHWAFGKNERSLKYIERCLQDFLGFGVLGPEGQLVSWIVMEQSCELRMGYTVPKYRHQGNMLQIGYHLEKYLSQKEIPFYFHVADNNEKSLQALNNLGFKICPCGWHQWKCTPKKYC</sequence>
<comment type="function">
    <text evidence="2 4">Mitochondrial acyltransferase which transfers the acyl group to the N-terminus of glycine (PubMed:20305126, PubMed:22475485). Conjugates numerous substrates, such as arachidonoyl-CoA and saturated medium and long-chain acyl-CoAs ranging from chain-length C8:0-CoA to C18:0-CoA, to form a variety of N-acylglycines. Shows a preference for monounsaturated fatty acid oleoyl-CoA (C18:1-CoA) as an acyl donor. Does not exhibit any activity toward C22:6-CoA and chenodeoxycholoyl-CoA, nor toward serine or alanine (PubMed:20305126).</text>
</comment>
<comment type="catalytic activity">
    <reaction evidence="2 4">
        <text>an acyl-CoA + glycine = an N-acylglycine + CoA + H(+)</text>
        <dbReference type="Rhea" id="RHEA:19869"/>
        <dbReference type="ChEBI" id="CHEBI:15378"/>
        <dbReference type="ChEBI" id="CHEBI:57287"/>
        <dbReference type="ChEBI" id="CHEBI:57305"/>
        <dbReference type="ChEBI" id="CHEBI:57670"/>
        <dbReference type="ChEBI" id="CHEBI:58342"/>
        <dbReference type="EC" id="2.3.1.13"/>
    </reaction>
    <physiologicalReaction direction="left-to-right" evidence="8">
        <dbReference type="Rhea" id="RHEA:19870"/>
    </physiologicalReaction>
</comment>
<comment type="catalytic activity">
    <reaction evidence="2">
        <text>(9Z)-hexadecenoyl-CoA + glycine = N-(9Z-hexadecenoyl)-glycine + CoA + H(+)</text>
        <dbReference type="Rhea" id="RHEA:51372"/>
        <dbReference type="ChEBI" id="CHEBI:15378"/>
        <dbReference type="ChEBI" id="CHEBI:57287"/>
        <dbReference type="ChEBI" id="CHEBI:57305"/>
        <dbReference type="ChEBI" id="CHEBI:61540"/>
        <dbReference type="ChEBI" id="CHEBI:134042"/>
    </reaction>
    <physiologicalReaction direction="left-to-right" evidence="7">
        <dbReference type="Rhea" id="RHEA:51373"/>
    </physiologicalReaction>
</comment>
<comment type="catalytic activity">
    <reaction evidence="2">
        <text>octadecanoyl-CoA + glycine = N-octadecanoylglycine + CoA + H(+)</text>
        <dbReference type="Rhea" id="RHEA:51368"/>
        <dbReference type="ChEBI" id="CHEBI:15378"/>
        <dbReference type="ChEBI" id="CHEBI:57287"/>
        <dbReference type="ChEBI" id="CHEBI:57305"/>
        <dbReference type="ChEBI" id="CHEBI:57394"/>
        <dbReference type="ChEBI" id="CHEBI:134041"/>
    </reaction>
    <physiologicalReaction direction="left-to-right" evidence="7">
        <dbReference type="Rhea" id="RHEA:51369"/>
    </physiologicalReaction>
</comment>
<comment type="catalytic activity">
    <reaction evidence="2">
        <text>(5Z,8Z,11Z,14Z)-eicosatetraenoyl-CoA + glycine = N-(5Z,8Z,11Z,14Z)-eicosatetraenoyl-glycine + CoA + H(+)</text>
        <dbReference type="Rhea" id="RHEA:51364"/>
        <dbReference type="ChEBI" id="CHEBI:15378"/>
        <dbReference type="ChEBI" id="CHEBI:57287"/>
        <dbReference type="ChEBI" id="CHEBI:57305"/>
        <dbReference type="ChEBI" id="CHEBI:57368"/>
        <dbReference type="ChEBI" id="CHEBI:59002"/>
    </reaction>
    <physiologicalReaction direction="left-to-right" evidence="7">
        <dbReference type="Rhea" id="RHEA:51365"/>
    </physiologicalReaction>
</comment>
<comment type="catalytic activity">
    <reaction evidence="2">
        <text>(9Z)-octadecenoyl-CoA + glycine = N-(9Z-octadecenoyl)glycine + CoA + H(+)</text>
        <dbReference type="Rhea" id="RHEA:51272"/>
        <dbReference type="ChEBI" id="CHEBI:15378"/>
        <dbReference type="ChEBI" id="CHEBI:57287"/>
        <dbReference type="ChEBI" id="CHEBI:57305"/>
        <dbReference type="ChEBI" id="CHEBI:57387"/>
        <dbReference type="ChEBI" id="CHEBI:133992"/>
    </reaction>
    <physiologicalReaction direction="left-to-right" evidence="7">
        <dbReference type="Rhea" id="RHEA:51273"/>
    </physiologicalReaction>
</comment>
<comment type="catalytic activity">
    <reaction evidence="2">
        <text>octanoyl-CoA + glycine = N-octanoylglycine + CoA + H(+)</text>
        <dbReference type="Rhea" id="RHEA:64240"/>
        <dbReference type="ChEBI" id="CHEBI:15378"/>
        <dbReference type="ChEBI" id="CHEBI:57287"/>
        <dbReference type="ChEBI" id="CHEBI:57305"/>
        <dbReference type="ChEBI" id="CHEBI:57386"/>
        <dbReference type="ChEBI" id="CHEBI:142681"/>
    </reaction>
</comment>
<comment type="catalytic activity">
    <reaction evidence="2">
        <text>decanoyl-CoA + glycine = N-decanoylglycine + CoA + H(+)</text>
        <dbReference type="Rhea" id="RHEA:64248"/>
        <dbReference type="ChEBI" id="CHEBI:15378"/>
        <dbReference type="ChEBI" id="CHEBI:57287"/>
        <dbReference type="ChEBI" id="CHEBI:57305"/>
        <dbReference type="ChEBI" id="CHEBI:61430"/>
        <dbReference type="ChEBI" id="CHEBI:142680"/>
    </reaction>
</comment>
<comment type="catalytic activity">
    <reaction evidence="2">
        <text>tetradecanoyl-CoA + glycine = N-tetradecanoylglycine + CoA + H(+)</text>
        <dbReference type="Rhea" id="RHEA:64252"/>
        <dbReference type="ChEBI" id="CHEBI:15378"/>
        <dbReference type="ChEBI" id="CHEBI:57287"/>
        <dbReference type="ChEBI" id="CHEBI:57305"/>
        <dbReference type="ChEBI" id="CHEBI:57385"/>
        <dbReference type="ChEBI" id="CHEBI:86500"/>
    </reaction>
</comment>
<comment type="catalytic activity">
    <reaction evidence="2">
        <text>dodecanoyl-CoA + glycine = N-dodecanoylglycine + CoA + H(+)</text>
        <dbReference type="Rhea" id="RHEA:64256"/>
        <dbReference type="ChEBI" id="CHEBI:15378"/>
        <dbReference type="ChEBI" id="CHEBI:57287"/>
        <dbReference type="ChEBI" id="CHEBI:57305"/>
        <dbReference type="ChEBI" id="CHEBI:57375"/>
        <dbReference type="ChEBI" id="CHEBI:142678"/>
    </reaction>
</comment>
<comment type="catalytic activity">
    <reaction evidence="2">
        <text>(9Z,12Z)-octadecadienoyl-CoA + glycine = N-(9Z,12Z-octadecadienoyl)-glycine + CoA + H(+)</text>
        <dbReference type="Rhea" id="RHEA:64260"/>
        <dbReference type="ChEBI" id="CHEBI:15378"/>
        <dbReference type="ChEBI" id="CHEBI:57287"/>
        <dbReference type="ChEBI" id="CHEBI:57305"/>
        <dbReference type="ChEBI" id="CHEBI:57383"/>
        <dbReference type="ChEBI" id="CHEBI:150011"/>
    </reaction>
</comment>
<comment type="catalytic activity">
    <reaction evidence="2">
        <text>a fatty acyl-CoA + glycine = an N-(fatty acyl)-glycine + CoA + H(+)</text>
        <dbReference type="Rhea" id="RHEA:64244"/>
        <dbReference type="ChEBI" id="CHEBI:15378"/>
        <dbReference type="ChEBI" id="CHEBI:57287"/>
        <dbReference type="ChEBI" id="CHEBI:57305"/>
        <dbReference type="ChEBI" id="CHEBI:77636"/>
        <dbReference type="ChEBI" id="CHEBI:149742"/>
    </reaction>
</comment>
<comment type="biophysicochemical properties">
    <kinetics>
        <KM evidence="2">4.4 uM for (9Z)-octadecenoyl-CoA</KM>
        <Vmax evidence="2">933.0 nmol/min/mg enzyme with (9Z)-octadecenoyl-CoA as substrate</Vmax>
    </kinetics>
</comment>
<comment type="subcellular location">
    <subcellularLocation>
        <location evidence="2">Endoplasmic reticulum</location>
    </subcellularLocation>
</comment>
<comment type="tissue specificity">
    <text evidence="2">Expressed at highest levels in salivary gland and trachea. Also detected in thyroid gland, spinal cord, prostate, lung and fetal brain.</text>
</comment>
<comment type="PTM">
    <text evidence="3">Acetylation at Lys-19 drastically decreases the production of N-oleoyl and N-arachidonoyl glycines.</text>
</comment>
<comment type="similarity">
    <text evidence="6">Belongs to the glycine N-acyltransferase family.</text>
</comment>
<reference key="1">
    <citation type="submission" date="2001-09" db="EMBL/GenBank/DDBJ databases">
        <title>Isolation of a novel BXMAS2-10 gene from IgM cross-linking induced human B cell.</title>
        <authorList>
            <person name="Nakayama Y."/>
            <person name="Weissman S.M."/>
            <person name="Bothwell A.L."/>
        </authorList>
    </citation>
    <scope>NUCLEOTIDE SEQUENCE [MRNA]</scope>
    <scope>VARIANT LYS-160</scope>
</reference>
<reference key="2">
    <citation type="journal article" date="2012" name="Biochem. Biophys. Res. Commun.">
        <title>Designation of enzyme activity of glycine-N-acyltransferase family genes and depression of glycine-N-acyltransferase in human hepatocellular carcinoma.</title>
        <authorList>
            <person name="Matsuo M."/>
            <person name="Terai K."/>
            <person name="Kameda N."/>
            <person name="Matsumoto A."/>
            <person name="Kurokawa Y."/>
            <person name="Funase Y."/>
            <person name="Nishikawa K."/>
            <person name="Sugaya N."/>
            <person name="Hiruta N."/>
            <person name="Kishimoto T."/>
        </authorList>
    </citation>
    <scope>NUCLEOTIDE SEQUENCE [MRNA]</scope>
    <scope>FUNCTION</scope>
    <scope>CATALYTIC ACTIVITY</scope>
</reference>
<reference key="3">
    <citation type="submission" date="2005-07" db="EMBL/GenBank/DDBJ databases">
        <authorList>
            <person name="Mural R.J."/>
            <person name="Istrail S."/>
            <person name="Sutton G."/>
            <person name="Florea L."/>
            <person name="Halpern A.L."/>
            <person name="Mobarry C.M."/>
            <person name="Lippert R."/>
            <person name="Walenz B."/>
            <person name="Shatkay H."/>
            <person name="Dew I."/>
            <person name="Miller J.R."/>
            <person name="Flanigan M.J."/>
            <person name="Edwards N.J."/>
            <person name="Bolanos R."/>
            <person name="Fasulo D."/>
            <person name="Halldorsson B.V."/>
            <person name="Hannenhalli S."/>
            <person name="Turner R."/>
            <person name="Yooseph S."/>
            <person name="Lu F."/>
            <person name="Nusskern D.R."/>
            <person name="Shue B.C."/>
            <person name="Zheng X.H."/>
            <person name="Zhong F."/>
            <person name="Delcher A.L."/>
            <person name="Huson D.H."/>
            <person name="Kravitz S.A."/>
            <person name="Mouchard L."/>
            <person name="Reinert K."/>
            <person name="Remington K.A."/>
            <person name="Clark A.G."/>
            <person name="Waterman M.S."/>
            <person name="Eichler E.E."/>
            <person name="Adams M.D."/>
            <person name="Hunkapiller M.W."/>
            <person name="Myers E.W."/>
            <person name="Venter J.C."/>
        </authorList>
    </citation>
    <scope>NUCLEOTIDE SEQUENCE [LARGE SCALE GENOMIC DNA]</scope>
</reference>
<reference key="4">
    <citation type="journal article" date="2004" name="Genome Res.">
        <title>The status, quality, and expansion of the NIH full-length cDNA project: the Mammalian Gene Collection (MGC).</title>
        <authorList>
            <consortium name="The MGC Project Team"/>
        </authorList>
    </citation>
    <scope>NUCLEOTIDE SEQUENCE [LARGE SCALE MRNA]</scope>
    <scope>VARIANTS SER-82 AND ILE-168</scope>
    <source>
        <tissue>Bone marrow</tissue>
    </source>
</reference>
<reference key="5">
    <citation type="journal article" date="2010" name="FASEB J.">
        <title>Identification of glycine N-acyltransferase-like 2 (GLYATL2) as a transferase that produces N-acyl glycines in humans.</title>
        <authorList>
            <person name="Waluk D.P."/>
            <person name="Schultz N."/>
            <person name="Hunt M.C."/>
        </authorList>
    </citation>
    <scope>FUNCTION</scope>
    <scope>BIOPHYSICOCHEMICAL PROPERTIES</scope>
    <scope>SUBCELLULAR LOCATION</scope>
    <scope>TISSUE SPECIFICITY</scope>
    <scope>CATALYTIC ACTIVITY</scope>
</reference>
<reference key="6">
    <citation type="journal article" date="2012" name="J. Biol. Chem.">
        <title>Reversible lysine acetylation regulates activity of human glycine N-acyltransferase-like 2 (hGLYATL2): implications for production of glycine-conjugated signaling molecules.</title>
        <authorList>
            <person name="Waluk D.P."/>
            <person name="Sucharski F."/>
            <person name="Sipos L."/>
            <person name="Silberring J."/>
            <person name="Hunt M.C."/>
        </authorList>
    </citation>
    <scope>ACETYLATION AT LYS-19</scope>
</reference>
<dbReference type="EC" id="2.3.1.13" evidence="2 4"/>
<dbReference type="EMBL" id="AF426250">
    <property type="protein sequence ID" value="AAO73139.1"/>
    <property type="molecule type" value="mRNA"/>
</dbReference>
<dbReference type="EMBL" id="AB207211">
    <property type="protein sequence ID" value="BAF63415.1"/>
    <property type="molecule type" value="mRNA"/>
</dbReference>
<dbReference type="EMBL" id="CH471076">
    <property type="protein sequence ID" value="EAW73826.1"/>
    <property type="molecule type" value="Genomic_DNA"/>
</dbReference>
<dbReference type="EMBL" id="BC016789">
    <property type="protein sequence ID" value="AAH16789.1"/>
    <property type="molecule type" value="mRNA"/>
</dbReference>
<dbReference type="EMBL" id="BC021682">
    <property type="protein sequence ID" value="AAH21682.1"/>
    <property type="molecule type" value="mRNA"/>
</dbReference>
<dbReference type="CCDS" id="CCDS41649.1"/>
<dbReference type="RefSeq" id="NP_659453.3">
    <property type="nucleotide sequence ID" value="NM_145016.3"/>
</dbReference>
<dbReference type="RefSeq" id="XP_016872826.1">
    <property type="nucleotide sequence ID" value="XM_017017337.3"/>
</dbReference>
<dbReference type="RefSeq" id="XP_016872827.1">
    <property type="nucleotide sequence ID" value="XM_017017338.3"/>
</dbReference>
<dbReference type="RefSeq" id="XP_054223967.1">
    <property type="nucleotide sequence ID" value="XM_054367992.1"/>
</dbReference>
<dbReference type="RefSeq" id="XP_054223968.1">
    <property type="nucleotide sequence ID" value="XM_054367993.1"/>
</dbReference>
<dbReference type="RefSeq" id="XP_054223969.1">
    <property type="nucleotide sequence ID" value="XM_054367994.1"/>
</dbReference>
<dbReference type="RefSeq" id="XP_054223970.1">
    <property type="nucleotide sequence ID" value="XM_054367995.1"/>
</dbReference>
<dbReference type="SMR" id="Q8WU03"/>
<dbReference type="FunCoup" id="Q8WU03">
    <property type="interactions" value="124"/>
</dbReference>
<dbReference type="STRING" id="9606.ENSP00000287275"/>
<dbReference type="DrugBank" id="DB00145">
    <property type="generic name" value="Glycine"/>
</dbReference>
<dbReference type="SwissLipids" id="SLP:000001661"/>
<dbReference type="iPTMnet" id="Q8WU03"/>
<dbReference type="PhosphoSitePlus" id="Q8WU03"/>
<dbReference type="BioMuta" id="GLYATL2"/>
<dbReference type="DMDM" id="74730653"/>
<dbReference type="MassIVE" id="Q8WU03"/>
<dbReference type="PaxDb" id="9606-ENSP00000287275"/>
<dbReference type="PeptideAtlas" id="Q8WU03"/>
<dbReference type="ProteomicsDB" id="74617"/>
<dbReference type="Antibodypedia" id="27688">
    <property type="antibodies" value="74 antibodies from 20 providers"/>
</dbReference>
<dbReference type="DNASU" id="219970"/>
<dbReference type="Ensembl" id="ENST00000287275.6">
    <property type="protein sequence ID" value="ENSP00000287275.1"/>
    <property type="gene ID" value="ENSG00000156689.7"/>
</dbReference>
<dbReference type="Ensembl" id="ENST00000532258.1">
    <property type="protein sequence ID" value="ENSP00000434277.1"/>
    <property type="gene ID" value="ENSG00000156689.7"/>
</dbReference>
<dbReference type="GeneID" id="219970"/>
<dbReference type="KEGG" id="hsa:219970"/>
<dbReference type="MANE-Select" id="ENST00000287275.6">
    <property type="protein sequence ID" value="ENSP00000287275.1"/>
    <property type="RefSeq nucleotide sequence ID" value="NM_145016.4"/>
    <property type="RefSeq protein sequence ID" value="NP_659453.3"/>
</dbReference>
<dbReference type="UCSC" id="uc001nnd.6">
    <property type="organism name" value="human"/>
</dbReference>
<dbReference type="AGR" id="HGNC:24178"/>
<dbReference type="CTD" id="219970"/>
<dbReference type="DisGeNET" id="219970"/>
<dbReference type="GeneCards" id="GLYATL2"/>
<dbReference type="HGNC" id="HGNC:24178">
    <property type="gene designation" value="GLYATL2"/>
</dbReference>
<dbReference type="HPA" id="ENSG00000156689">
    <property type="expression patterns" value="Tissue enhanced (breast, cervix, salivary gland)"/>
</dbReference>
<dbReference type="MIM" id="614762">
    <property type="type" value="gene"/>
</dbReference>
<dbReference type="neXtProt" id="NX_Q8WU03"/>
<dbReference type="OpenTargets" id="ENSG00000156689"/>
<dbReference type="PharmGKB" id="PA142671728"/>
<dbReference type="VEuPathDB" id="HostDB:ENSG00000156689"/>
<dbReference type="eggNOG" id="ENOG502QVT5">
    <property type="taxonomic scope" value="Eukaryota"/>
</dbReference>
<dbReference type="GeneTree" id="ENSGT00950000183133"/>
<dbReference type="HOGENOM" id="CLU_060336_0_0_1"/>
<dbReference type="InParanoid" id="Q8WU03"/>
<dbReference type="OMA" id="GLINEHW"/>
<dbReference type="OrthoDB" id="61870at2759"/>
<dbReference type="PAN-GO" id="Q8WU03">
    <property type="GO annotations" value="1 GO annotation based on evolutionary models"/>
</dbReference>
<dbReference type="PhylomeDB" id="Q8WU03"/>
<dbReference type="TreeFam" id="TF353258"/>
<dbReference type="BRENDA" id="2.3.1.13">
    <property type="organism ID" value="2681"/>
</dbReference>
<dbReference type="PathwayCommons" id="Q8WU03"/>
<dbReference type="Reactome" id="R-HSA-177128">
    <property type="pathway name" value="Conjugation of salicylate with glycine"/>
</dbReference>
<dbReference type="Reactome" id="R-HSA-177135">
    <property type="pathway name" value="Conjugation of benzoate with glycine"/>
</dbReference>
<dbReference type="Reactome" id="R-HSA-9749641">
    <property type="pathway name" value="Aspirin ADME"/>
</dbReference>
<dbReference type="SABIO-RK" id="Q8WU03"/>
<dbReference type="BioGRID-ORCS" id="219970">
    <property type="hits" value="7 hits in 1115 CRISPR screens"/>
</dbReference>
<dbReference type="ChiTaRS" id="GLYATL2">
    <property type="organism name" value="human"/>
</dbReference>
<dbReference type="GenomeRNAi" id="219970"/>
<dbReference type="Pharos" id="Q8WU03">
    <property type="development level" value="Tbio"/>
</dbReference>
<dbReference type="PRO" id="PR:Q8WU03"/>
<dbReference type="Proteomes" id="UP000005640">
    <property type="component" value="Chromosome 11"/>
</dbReference>
<dbReference type="RNAct" id="Q8WU03">
    <property type="molecule type" value="protein"/>
</dbReference>
<dbReference type="Bgee" id="ENSG00000156689">
    <property type="expression patterns" value="Expressed in minor salivary gland and 98 other cell types or tissues"/>
</dbReference>
<dbReference type="ExpressionAtlas" id="Q8WU03">
    <property type="expression patterns" value="baseline and differential"/>
</dbReference>
<dbReference type="GO" id="GO:0005783">
    <property type="term" value="C:endoplasmic reticulum"/>
    <property type="evidence" value="ECO:0000314"/>
    <property type="project" value="UniProtKB"/>
</dbReference>
<dbReference type="GO" id="GO:0005739">
    <property type="term" value="C:mitochondrion"/>
    <property type="evidence" value="ECO:0007669"/>
    <property type="project" value="InterPro"/>
</dbReference>
<dbReference type="GO" id="GO:0047961">
    <property type="term" value="F:glycine N-acyltransferase activity"/>
    <property type="evidence" value="ECO:0000314"/>
    <property type="project" value="UniProtKB"/>
</dbReference>
<dbReference type="GO" id="GO:0042758">
    <property type="term" value="P:long-chain fatty acid catabolic process"/>
    <property type="evidence" value="ECO:0000314"/>
    <property type="project" value="UniProtKB"/>
</dbReference>
<dbReference type="GO" id="GO:0051793">
    <property type="term" value="P:medium-chain fatty acid catabolic process"/>
    <property type="evidence" value="ECO:0000314"/>
    <property type="project" value="UniProtKB"/>
</dbReference>
<dbReference type="GO" id="GO:1903965">
    <property type="term" value="P:monounsaturated fatty acid catabolic process"/>
    <property type="evidence" value="ECO:0000314"/>
    <property type="project" value="UniProtKB"/>
</dbReference>
<dbReference type="Gene3D" id="3.40.630.30">
    <property type="match status" value="1"/>
</dbReference>
<dbReference type="InterPro" id="IPR016181">
    <property type="entry name" value="Acyl_CoA_acyltransferase"/>
</dbReference>
<dbReference type="InterPro" id="IPR010313">
    <property type="entry name" value="Glycine_N-acyltransferase"/>
</dbReference>
<dbReference type="InterPro" id="IPR013652">
    <property type="entry name" value="Glycine_N-acyltransferase_C"/>
</dbReference>
<dbReference type="InterPro" id="IPR015938">
    <property type="entry name" value="Glycine_N-acyltransferase_N"/>
</dbReference>
<dbReference type="PANTHER" id="PTHR15298:SF4">
    <property type="entry name" value="GLYCINE N-ACYLTRANSFERASE-LIKE PROTEIN 2"/>
    <property type="match status" value="1"/>
</dbReference>
<dbReference type="PANTHER" id="PTHR15298">
    <property type="entry name" value="L-COA N-ACYLTRANSFERASE-RELATED"/>
    <property type="match status" value="1"/>
</dbReference>
<dbReference type="Pfam" id="PF08444">
    <property type="entry name" value="Gly_acyl_tr_C"/>
    <property type="match status" value="1"/>
</dbReference>
<dbReference type="Pfam" id="PF06021">
    <property type="entry name" value="Gly_acyl_tr_N"/>
    <property type="match status" value="1"/>
</dbReference>
<dbReference type="SUPFAM" id="SSF55729">
    <property type="entry name" value="Acyl-CoA N-acyltransferases (Nat)"/>
    <property type="match status" value="1"/>
</dbReference>
<gene>
    <name evidence="9" type="primary">GLYATL2</name>
</gene>
<name>GLYL2_HUMAN</name>
<protein>
    <recommendedName>
        <fullName evidence="6">Glycine N-acyltransferase-like protein 2</fullName>
        <ecNumber evidence="2 4">2.3.1.13</ecNumber>
    </recommendedName>
    <alternativeName>
        <fullName>Acyl-CoA:glycine N-acyltransferase-like protein 2</fullName>
    </alternativeName>
</protein>
<keyword id="KW-0007">Acetylation</keyword>
<keyword id="KW-0012">Acyltransferase</keyword>
<keyword id="KW-0256">Endoplasmic reticulum</keyword>
<keyword id="KW-0443">Lipid metabolism</keyword>
<keyword id="KW-1267">Proteomics identification</keyword>
<keyword id="KW-1185">Reference proteome</keyword>
<keyword id="KW-0808">Transferase</keyword>
<feature type="chain" id="PRO_0000281875" description="Glycine N-acyltransferase-like protein 2">
    <location>
        <begin position="1"/>
        <end position="294"/>
    </location>
</feature>
<feature type="modified residue" description="N6-acetyllysine" evidence="3">
    <location>
        <position position="19"/>
    </location>
</feature>
<feature type="sequence variant" id="VAR_031296" description="In dbSNP:rs17856514." evidence="1">
    <original>P</original>
    <variation>S</variation>
    <location>
        <position position="82"/>
    </location>
</feature>
<feature type="sequence variant" id="VAR_031297" description="In dbSNP:rs11229651." evidence="5">
    <original>E</original>
    <variation>K</variation>
    <location>
        <position position="160"/>
    </location>
</feature>
<feature type="sequence variant" id="VAR_031298" description="In dbSNP:rs17851433." evidence="1">
    <original>L</original>
    <variation>I</variation>
    <location>
        <position position="168"/>
    </location>
</feature>
<feature type="sequence conflict" description="In Ref. 1; AAO73139." evidence="6" ref="1">
    <original>Q</original>
    <variation>R</variation>
    <location>
        <position position="219"/>
    </location>
</feature>
<feature type="sequence conflict" description="In Ref. 1; AAO73139." evidence="6" ref="1">
    <original>Y</original>
    <variation>C</variation>
    <location>
        <position position="293"/>
    </location>
</feature>
<proteinExistence type="evidence at protein level"/>
<organism>
    <name type="scientific">Homo sapiens</name>
    <name type="common">Human</name>
    <dbReference type="NCBI Taxonomy" id="9606"/>
    <lineage>
        <taxon>Eukaryota</taxon>
        <taxon>Metazoa</taxon>
        <taxon>Chordata</taxon>
        <taxon>Craniata</taxon>
        <taxon>Vertebrata</taxon>
        <taxon>Euteleostomi</taxon>
        <taxon>Mammalia</taxon>
        <taxon>Eutheria</taxon>
        <taxon>Euarchontoglires</taxon>
        <taxon>Primates</taxon>
        <taxon>Haplorrhini</taxon>
        <taxon>Catarrhini</taxon>
        <taxon>Hominidae</taxon>
        <taxon>Homo</taxon>
    </lineage>
</organism>
<evidence type="ECO:0000269" key="1">
    <source>
    </source>
</evidence>
<evidence type="ECO:0000269" key="2">
    <source>
    </source>
</evidence>
<evidence type="ECO:0000269" key="3">
    <source>
    </source>
</evidence>
<evidence type="ECO:0000269" key="4">
    <source>
    </source>
</evidence>
<evidence type="ECO:0000269" key="5">
    <source ref="1"/>
</evidence>
<evidence type="ECO:0000305" key="6"/>
<evidence type="ECO:0000305" key="7">
    <source>
    </source>
</evidence>
<evidence type="ECO:0000305" key="8">
    <source>
    </source>
</evidence>
<evidence type="ECO:0000312" key="9">
    <source>
        <dbReference type="HGNC" id="HGNC:24178"/>
    </source>
</evidence>
<accession>Q8WU03</accession>
<accession>A5LGC7</accession>
<accession>Q86WC3</accession>
<accession>Q96AT2</accession>